<dbReference type="EC" id="2.1.1.186" evidence="1"/>
<dbReference type="EMBL" id="CP000821">
    <property type="protein sequence ID" value="ABV37923.1"/>
    <property type="molecule type" value="Genomic_DNA"/>
</dbReference>
<dbReference type="RefSeq" id="WP_012143653.1">
    <property type="nucleotide sequence ID" value="NC_009831.1"/>
</dbReference>
<dbReference type="SMR" id="A8FYK0"/>
<dbReference type="STRING" id="425104.Ssed_3319"/>
<dbReference type="KEGG" id="sse:Ssed_3319"/>
<dbReference type="eggNOG" id="COG2933">
    <property type="taxonomic scope" value="Bacteria"/>
</dbReference>
<dbReference type="HOGENOM" id="CLU_043780_0_0_6"/>
<dbReference type="OrthoDB" id="154490at2"/>
<dbReference type="Proteomes" id="UP000002015">
    <property type="component" value="Chromosome"/>
</dbReference>
<dbReference type="GO" id="GO:0005737">
    <property type="term" value="C:cytoplasm"/>
    <property type="evidence" value="ECO:0007669"/>
    <property type="project" value="UniProtKB-SubCell"/>
</dbReference>
<dbReference type="GO" id="GO:0008757">
    <property type="term" value="F:S-adenosylmethionine-dependent methyltransferase activity"/>
    <property type="evidence" value="ECO:0007669"/>
    <property type="project" value="UniProtKB-UniRule"/>
</dbReference>
<dbReference type="GO" id="GO:0032259">
    <property type="term" value="P:methylation"/>
    <property type="evidence" value="ECO:0007669"/>
    <property type="project" value="UniProtKB-KW"/>
</dbReference>
<dbReference type="GO" id="GO:0006364">
    <property type="term" value="P:rRNA processing"/>
    <property type="evidence" value="ECO:0007669"/>
    <property type="project" value="UniProtKB-UniRule"/>
</dbReference>
<dbReference type="Gene3D" id="3.30.2300.20">
    <property type="match status" value="1"/>
</dbReference>
<dbReference type="Gene3D" id="3.30.70.2810">
    <property type="match status" value="1"/>
</dbReference>
<dbReference type="Gene3D" id="3.40.50.150">
    <property type="entry name" value="Vaccinia Virus protein VP39"/>
    <property type="match status" value="1"/>
</dbReference>
<dbReference type="HAMAP" id="MF_01551">
    <property type="entry name" value="23SrRNA_methyltr_M"/>
    <property type="match status" value="1"/>
</dbReference>
<dbReference type="InterPro" id="IPR040739">
    <property type="entry name" value="RlmM_FDX"/>
</dbReference>
<dbReference type="InterPro" id="IPR048646">
    <property type="entry name" value="RlmM_THUMP-like"/>
</dbReference>
<dbReference type="InterPro" id="IPR002877">
    <property type="entry name" value="RNA_MeTrfase_FtsJ_dom"/>
</dbReference>
<dbReference type="InterPro" id="IPR011224">
    <property type="entry name" value="rRNA_MeTrfase_M"/>
</dbReference>
<dbReference type="InterPro" id="IPR029063">
    <property type="entry name" value="SAM-dependent_MTases_sf"/>
</dbReference>
<dbReference type="NCBIfam" id="NF008734">
    <property type="entry name" value="PRK11760.1"/>
    <property type="match status" value="1"/>
</dbReference>
<dbReference type="PANTHER" id="PTHR37524">
    <property type="entry name" value="RIBOSOMAL RNA LARGE SUBUNIT METHYLTRANSFERASE M"/>
    <property type="match status" value="1"/>
</dbReference>
<dbReference type="PANTHER" id="PTHR37524:SF2">
    <property type="entry name" value="RIBOSOMAL RNA METHYLTRANSFERASE FTSJ DOMAIN-CONTAINING PROTEIN"/>
    <property type="match status" value="1"/>
</dbReference>
<dbReference type="Pfam" id="PF01728">
    <property type="entry name" value="FtsJ"/>
    <property type="match status" value="1"/>
</dbReference>
<dbReference type="Pfam" id="PF18125">
    <property type="entry name" value="RlmM_FDX"/>
    <property type="match status" value="1"/>
</dbReference>
<dbReference type="Pfam" id="PF21239">
    <property type="entry name" value="RLMM_N"/>
    <property type="match status" value="1"/>
</dbReference>
<dbReference type="PIRSF" id="PIRSF028774">
    <property type="entry name" value="UCP028774"/>
    <property type="match status" value="1"/>
</dbReference>
<dbReference type="SUPFAM" id="SSF53335">
    <property type="entry name" value="S-adenosyl-L-methionine-dependent methyltransferases"/>
    <property type="match status" value="1"/>
</dbReference>
<comment type="function">
    <text evidence="1">Catalyzes the 2'-O-methylation at nucleotide C2498 in 23S rRNA.</text>
</comment>
<comment type="catalytic activity">
    <reaction evidence="1">
        <text>cytidine(2498) in 23S rRNA + S-adenosyl-L-methionine = 2'-O-methylcytidine(2498) in 23S rRNA + S-adenosyl-L-homocysteine + H(+)</text>
        <dbReference type="Rhea" id="RHEA:42788"/>
        <dbReference type="Rhea" id="RHEA-COMP:10244"/>
        <dbReference type="Rhea" id="RHEA-COMP:10245"/>
        <dbReference type="ChEBI" id="CHEBI:15378"/>
        <dbReference type="ChEBI" id="CHEBI:57856"/>
        <dbReference type="ChEBI" id="CHEBI:59789"/>
        <dbReference type="ChEBI" id="CHEBI:74495"/>
        <dbReference type="ChEBI" id="CHEBI:82748"/>
        <dbReference type="EC" id="2.1.1.186"/>
    </reaction>
</comment>
<comment type="subunit">
    <text evidence="1">Monomer.</text>
</comment>
<comment type="subcellular location">
    <subcellularLocation>
        <location evidence="1">Cytoplasm</location>
    </subcellularLocation>
</comment>
<comment type="similarity">
    <text evidence="1">Belongs to the class I-like SAM-binding methyltransferase superfamily. RNA methyltransferase RlmE family. RlmM subfamily.</text>
</comment>
<proteinExistence type="inferred from homology"/>
<protein>
    <recommendedName>
        <fullName evidence="1">Ribosomal RNA large subunit methyltransferase M</fullName>
        <ecNumber evidence="1">2.1.1.186</ecNumber>
    </recommendedName>
    <alternativeName>
        <fullName evidence="1">23S rRNA (cytidine2498-2'-O)-methyltransferase</fullName>
    </alternativeName>
    <alternativeName>
        <fullName evidence="1">23S rRNA 2'-O-ribose methyltransferase RlmM</fullName>
    </alternativeName>
</protein>
<name>RLMM_SHESH</name>
<gene>
    <name evidence="1" type="primary">rlmM</name>
    <name type="ordered locus">Ssed_3319</name>
</gene>
<sequence length="360" mass="40622">MINLFLFCRAGYEKECAAEIQHRAAELDIGGFVKTNKNDAYVIFQCFQAGDAAVLAQKIKLDSLIFARQMFAAKALLKNLPENDRITPIMEALSDVRNAGELRVETPDTDAAKERTTFCRKFTVPLRQKLKNSGNLLKKESSSRPIIHVCFVASGTAYVGFSFSNNSSPYPMGIPRLKMASDAPSRSTLKLDEAFIHFIPEEEKELRLSSGMNAVDLGACPGGWTYQLVRRGMFVAAIDNGAMDEGLMETGQVKHYQADGFRFEPPRKNIYWLVCDMIEKPSRVAELIEAWAINGWFKEAMFNLKLPMKSRYQDVTTILETMATVLKENEIKNFSIKCKHLYHDRDEVTVYLSLNPTQVS</sequence>
<accession>A8FYK0</accession>
<feature type="chain" id="PRO_1000087742" description="Ribosomal RNA large subunit methyltransferase M">
    <location>
        <begin position="1"/>
        <end position="360"/>
    </location>
</feature>
<feature type="active site" description="Proton acceptor" evidence="1">
    <location>
        <position position="305"/>
    </location>
</feature>
<feature type="binding site" evidence="1">
    <location>
        <position position="187"/>
    </location>
    <ligand>
        <name>S-adenosyl-L-methionine</name>
        <dbReference type="ChEBI" id="CHEBI:59789"/>
    </ligand>
</feature>
<feature type="binding site" evidence="1">
    <location>
        <begin position="220"/>
        <end position="223"/>
    </location>
    <ligand>
        <name>S-adenosyl-L-methionine</name>
        <dbReference type="ChEBI" id="CHEBI:59789"/>
    </ligand>
</feature>
<feature type="binding site" evidence="1">
    <location>
        <position position="239"/>
    </location>
    <ligand>
        <name>S-adenosyl-L-methionine</name>
        <dbReference type="ChEBI" id="CHEBI:59789"/>
    </ligand>
</feature>
<feature type="binding site" evidence="1">
    <location>
        <position position="259"/>
    </location>
    <ligand>
        <name>S-adenosyl-L-methionine</name>
        <dbReference type="ChEBI" id="CHEBI:59789"/>
    </ligand>
</feature>
<feature type="binding site" evidence="1">
    <location>
        <position position="276"/>
    </location>
    <ligand>
        <name>S-adenosyl-L-methionine</name>
        <dbReference type="ChEBI" id="CHEBI:59789"/>
    </ligand>
</feature>
<reference key="1">
    <citation type="submission" date="2007-08" db="EMBL/GenBank/DDBJ databases">
        <title>Complete sequence of Shewanella sediminis HAW-EB3.</title>
        <authorList>
            <consortium name="US DOE Joint Genome Institute"/>
            <person name="Copeland A."/>
            <person name="Lucas S."/>
            <person name="Lapidus A."/>
            <person name="Barry K."/>
            <person name="Glavina del Rio T."/>
            <person name="Dalin E."/>
            <person name="Tice H."/>
            <person name="Pitluck S."/>
            <person name="Chertkov O."/>
            <person name="Brettin T."/>
            <person name="Bruce D."/>
            <person name="Detter J.C."/>
            <person name="Han C."/>
            <person name="Schmutz J."/>
            <person name="Larimer F."/>
            <person name="Land M."/>
            <person name="Hauser L."/>
            <person name="Kyrpides N."/>
            <person name="Kim E."/>
            <person name="Zhao J.-S."/>
            <person name="Richardson P."/>
        </authorList>
    </citation>
    <scope>NUCLEOTIDE SEQUENCE [LARGE SCALE GENOMIC DNA]</scope>
    <source>
        <strain>HAW-EB3</strain>
    </source>
</reference>
<keyword id="KW-0963">Cytoplasm</keyword>
<keyword id="KW-0489">Methyltransferase</keyword>
<keyword id="KW-1185">Reference proteome</keyword>
<keyword id="KW-0698">rRNA processing</keyword>
<keyword id="KW-0949">S-adenosyl-L-methionine</keyword>
<keyword id="KW-0808">Transferase</keyword>
<organism>
    <name type="scientific">Shewanella sediminis (strain HAW-EB3)</name>
    <dbReference type="NCBI Taxonomy" id="425104"/>
    <lineage>
        <taxon>Bacteria</taxon>
        <taxon>Pseudomonadati</taxon>
        <taxon>Pseudomonadota</taxon>
        <taxon>Gammaproteobacteria</taxon>
        <taxon>Alteromonadales</taxon>
        <taxon>Shewanellaceae</taxon>
        <taxon>Shewanella</taxon>
    </lineage>
</organism>
<evidence type="ECO:0000255" key="1">
    <source>
        <dbReference type="HAMAP-Rule" id="MF_01551"/>
    </source>
</evidence>